<protein>
    <recommendedName>
        <fullName>Leucine-responsive regulatory protein</fullName>
    </recommendedName>
</protein>
<keyword id="KW-0010">Activator</keyword>
<keyword id="KW-0238">DNA-binding</keyword>
<keyword id="KW-1185">Reference proteome</keyword>
<keyword id="KW-0804">Transcription</keyword>
<keyword id="KW-0805">Transcription regulation</keyword>
<dbReference type="EMBL" id="AE005674">
    <property type="protein sequence ID" value="AAN42481.2"/>
    <property type="molecule type" value="Genomic_DNA"/>
</dbReference>
<dbReference type="EMBL" id="AE014073">
    <property type="protein sequence ID" value="AAP16353.1"/>
    <property type="molecule type" value="Genomic_DNA"/>
</dbReference>
<dbReference type="RefSeq" id="NP_706774.2">
    <property type="nucleotide sequence ID" value="NC_004337.2"/>
</dbReference>
<dbReference type="RefSeq" id="WP_000228473.1">
    <property type="nucleotide sequence ID" value="NZ_WPGW01000037.1"/>
</dbReference>
<dbReference type="BMRB" id="P0ACJ3"/>
<dbReference type="SMR" id="P0ACJ3"/>
<dbReference type="STRING" id="198214.SF0848"/>
<dbReference type="PaxDb" id="198214-SF0848"/>
<dbReference type="GeneID" id="1023815"/>
<dbReference type="GeneID" id="97601058"/>
<dbReference type="KEGG" id="sfl:SF0848"/>
<dbReference type="KEGG" id="sfx:S0889"/>
<dbReference type="PATRIC" id="fig|198214.7.peg.978"/>
<dbReference type="HOGENOM" id="CLU_091233_0_0_6"/>
<dbReference type="Proteomes" id="UP000001006">
    <property type="component" value="Chromosome"/>
</dbReference>
<dbReference type="Proteomes" id="UP000002673">
    <property type="component" value="Chromosome"/>
</dbReference>
<dbReference type="GO" id="GO:0005829">
    <property type="term" value="C:cytosol"/>
    <property type="evidence" value="ECO:0007669"/>
    <property type="project" value="TreeGrafter"/>
</dbReference>
<dbReference type="GO" id="GO:0043565">
    <property type="term" value="F:sequence-specific DNA binding"/>
    <property type="evidence" value="ECO:0007669"/>
    <property type="project" value="InterPro"/>
</dbReference>
<dbReference type="GO" id="GO:0006524">
    <property type="term" value="P:alanine catabolic process"/>
    <property type="evidence" value="ECO:0007669"/>
    <property type="project" value="TreeGrafter"/>
</dbReference>
<dbReference type="GO" id="GO:0006355">
    <property type="term" value="P:regulation of DNA-templated transcription"/>
    <property type="evidence" value="ECO:0007669"/>
    <property type="project" value="UniProtKB-ARBA"/>
</dbReference>
<dbReference type="GO" id="GO:0043201">
    <property type="term" value="P:response to L-leucine"/>
    <property type="evidence" value="ECO:0007669"/>
    <property type="project" value="TreeGrafter"/>
</dbReference>
<dbReference type="CDD" id="cd00090">
    <property type="entry name" value="HTH_ARSR"/>
    <property type="match status" value="1"/>
</dbReference>
<dbReference type="FunFam" id="1.10.10.10:FF:000015">
    <property type="entry name" value="Leucine-responsive transcriptional regulator Lrp"/>
    <property type="match status" value="1"/>
</dbReference>
<dbReference type="FunFam" id="3.30.70.920:FF:000001">
    <property type="entry name" value="Transcriptional regulator, AsnC family"/>
    <property type="match status" value="1"/>
</dbReference>
<dbReference type="Gene3D" id="3.30.70.920">
    <property type="match status" value="1"/>
</dbReference>
<dbReference type="Gene3D" id="1.10.10.10">
    <property type="entry name" value="Winged helix-like DNA-binding domain superfamily/Winged helix DNA-binding domain"/>
    <property type="match status" value="1"/>
</dbReference>
<dbReference type="InterPro" id="IPR011991">
    <property type="entry name" value="ArsR-like_HTH"/>
</dbReference>
<dbReference type="InterPro" id="IPR000485">
    <property type="entry name" value="AsnC-type_HTH_dom"/>
</dbReference>
<dbReference type="InterPro" id="IPR011008">
    <property type="entry name" value="Dimeric_a/b-barrel"/>
</dbReference>
<dbReference type="InterPro" id="IPR019888">
    <property type="entry name" value="Tscrpt_reg_AsnC-like"/>
</dbReference>
<dbReference type="InterPro" id="IPR019887">
    <property type="entry name" value="Tscrpt_reg_AsnC/Lrp_C"/>
</dbReference>
<dbReference type="InterPro" id="IPR019885">
    <property type="entry name" value="Tscrpt_reg_HTH_AsnC-type_CS"/>
</dbReference>
<dbReference type="InterPro" id="IPR036388">
    <property type="entry name" value="WH-like_DNA-bd_sf"/>
</dbReference>
<dbReference type="InterPro" id="IPR036390">
    <property type="entry name" value="WH_DNA-bd_sf"/>
</dbReference>
<dbReference type="NCBIfam" id="NF008370">
    <property type="entry name" value="PRK11169.1"/>
    <property type="match status" value="1"/>
</dbReference>
<dbReference type="PANTHER" id="PTHR30154">
    <property type="entry name" value="LEUCINE-RESPONSIVE REGULATORY PROTEIN"/>
    <property type="match status" value="1"/>
</dbReference>
<dbReference type="PANTHER" id="PTHR30154:SF0">
    <property type="entry name" value="LEUCINE-RESPONSIVE REGULATORY PROTEIN"/>
    <property type="match status" value="1"/>
</dbReference>
<dbReference type="Pfam" id="PF01037">
    <property type="entry name" value="AsnC_trans_reg"/>
    <property type="match status" value="1"/>
</dbReference>
<dbReference type="Pfam" id="PF13412">
    <property type="entry name" value="HTH_24"/>
    <property type="match status" value="1"/>
</dbReference>
<dbReference type="PRINTS" id="PR00033">
    <property type="entry name" value="HTHASNC"/>
</dbReference>
<dbReference type="SMART" id="SM00344">
    <property type="entry name" value="HTH_ASNC"/>
    <property type="match status" value="1"/>
</dbReference>
<dbReference type="SUPFAM" id="SSF54909">
    <property type="entry name" value="Dimeric alpha+beta barrel"/>
    <property type="match status" value="1"/>
</dbReference>
<dbReference type="SUPFAM" id="SSF46785">
    <property type="entry name" value="Winged helix' DNA-binding domain"/>
    <property type="match status" value="1"/>
</dbReference>
<dbReference type="PROSITE" id="PS00519">
    <property type="entry name" value="HTH_ASNC_1"/>
    <property type="match status" value="1"/>
</dbReference>
<dbReference type="PROSITE" id="PS50956">
    <property type="entry name" value="HTH_ASNC_2"/>
    <property type="match status" value="1"/>
</dbReference>
<accession>P0ACJ3</accession>
<accession>P19494</accession>
<reference key="1">
    <citation type="journal article" date="2002" name="Nucleic Acids Res.">
        <title>Genome sequence of Shigella flexneri 2a: insights into pathogenicity through comparison with genomes of Escherichia coli K12 and O157.</title>
        <authorList>
            <person name="Jin Q."/>
            <person name="Yuan Z."/>
            <person name="Xu J."/>
            <person name="Wang Y."/>
            <person name="Shen Y."/>
            <person name="Lu W."/>
            <person name="Wang J."/>
            <person name="Liu H."/>
            <person name="Yang J."/>
            <person name="Yang F."/>
            <person name="Zhang X."/>
            <person name="Zhang J."/>
            <person name="Yang G."/>
            <person name="Wu H."/>
            <person name="Qu D."/>
            <person name="Dong J."/>
            <person name="Sun L."/>
            <person name="Xue Y."/>
            <person name="Zhao A."/>
            <person name="Gao Y."/>
            <person name="Zhu J."/>
            <person name="Kan B."/>
            <person name="Ding K."/>
            <person name="Chen S."/>
            <person name="Cheng H."/>
            <person name="Yao Z."/>
            <person name="He B."/>
            <person name="Chen R."/>
            <person name="Ma D."/>
            <person name="Qiang B."/>
            <person name="Wen Y."/>
            <person name="Hou Y."/>
            <person name="Yu J."/>
        </authorList>
    </citation>
    <scope>NUCLEOTIDE SEQUENCE [LARGE SCALE GENOMIC DNA]</scope>
    <source>
        <strain>301 / Serotype 2a</strain>
    </source>
</reference>
<reference key="2">
    <citation type="journal article" date="2003" name="Infect. Immun.">
        <title>Complete genome sequence and comparative genomics of Shigella flexneri serotype 2a strain 2457T.</title>
        <authorList>
            <person name="Wei J."/>
            <person name="Goldberg M.B."/>
            <person name="Burland V."/>
            <person name="Venkatesan M.M."/>
            <person name="Deng W."/>
            <person name="Fournier G."/>
            <person name="Mayhew G.F."/>
            <person name="Plunkett G. III"/>
            <person name="Rose D.J."/>
            <person name="Darling A."/>
            <person name="Mau B."/>
            <person name="Perna N.T."/>
            <person name="Payne S.M."/>
            <person name="Runyen-Janecky L.J."/>
            <person name="Zhou S."/>
            <person name="Schwartz D.C."/>
            <person name="Blattner F.R."/>
        </authorList>
    </citation>
    <scope>NUCLEOTIDE SEQUENCE [LARGE SCALE GENOMIC DNA]</scope>
    <source>
        <strain>ATCC 700930 / 2457T / Serotype 2a</strain>
    </source>
</reference>
<gene>
    <name type="primary">lrp</name>
    <name type="ordered locus">SF0848</name>
    <name type="ordered locus">S0889</name>
</gene>
<sequence>MVDSKKRPGKDLDRIDRNILNELQKDGRISNVELSKRVGLSPTPCLERVRRLERQGFIQGYTALLNPHYLDASLLVFVEITLNRGAPDVFEQFNTAVQKLEEIQECHLVSGDFDYLLKTRVPDMSAYRKLLGETLLRLPGVNDTRTYVVMEEVKQSNRLVIKTR</sequence>
<comment type="function">
    <text evidence="1">Mediates a global response to leucine. Exogenous leucine affects the expression of a number of different operons; lrp mediates this effect for at least some of these operons. For example it is regulator of the branched-chain amino acid transport genes (By similarity).</text>
</comment>
<comment type="subunit">
    <text evidence="1">Homodimer.</text>
</comment>
<name>LRP_SHIFL</name>
<organism>
    <name type="scientific">Shigella flexneri</name>
    <dbReference type="NCBI Taxonomy" id="623"/>
    <lineage>
        <taxon>Bacteria</taxon>
        <taxon>Pseudomonadati</taxon>
        <taxon>Pseudomonadota</taxon>
        <taxon>Gammaproteobacteria</taxon>
        <taxon>Enterobacterales</taxon>
        <taxon>Enterobacteriaceae</taxon>
        <taxon>Shigella</taxon>
    </lineage>
</organism>
<proteinExistence type="inferred from homology"/>
<feature type="initiator methionine" description="Removed" evidence="1">
    <location>
        <position position="1"/>
    </location>
</feature>
<feature type="chain" id="PRO_0000111737" description="Leucine-responsive regulatory protein">
    <location>
        <begin position="2"/>
        <end position="164"/>
    </location>
</feature>
<feature type="domain" description="HTH asnC-type" evidence="2">
    <location>
        <begin position="12"/>
        <end position="73"/>
    </location>
</feature>
<feature type="DNA-binding region" description="H-T-H motif" evidence="2">
    <location>
        <begin position="31"/>
        <end position="50"/>
    </location>
</feature>
<evidence type="ECO:0000250" key="1"/>
<evidence type="ECO:0000255" key="2">
    <source>
        <dbReference type="PROSITE-ProRule" id="PRU00319"/>
    </source>
</evidence>